<organism>
    <name type="scientific">Cricetulus griseus</name>
    <name type="common">Chinese hamster</name>
    <name type="synonym">Cricetulus barabensis griseus</name>
    <dbReference type="NCBI Taxonomy" id="10029"/>
    <lineage>
        <taxon>Eukaryota</taxon>
        <taxon>Metazoa</taxon>
        <taxon>Chordata</taxon>
        <taxon>Craniata</taxon>
        <taxon>Vertebrata</taxon>
        <taxon>Euteleostomi</taxon>
        <taxon>Mammalia</taxon>
        <taxon>Eutheria</taxon>
        <taxon>Euarchontoglires</taxon>
        <taxon>Glires</taxon>
        <taxon>Rodentia</taxon>
        <taxon>Myomorpha</taxon>
        <taxon>Muroidea</taxon>
        <taxon>Cricetidae</taxon>
        <taxon>Cricetinae</taxon>
        <taxon>Cricetulus</taxon>
    </lineage>
</organism>
<reference key="1">
    <citation type="journal article" date="1997" name="Mol. Cell">
        <title>Complementation cloning of S2P, a gene encoding a putative metalloprotease required for intramembrane cleavage of SREBPs.</title>
        <authorList>
            <person name="Rawson R.B."/>
            <person name="Zelenski N.G."/>
            <person name="Nijhawan D."/>
            <person name="Ye J."/>
            <person name="Sakai J."/>
            <person name="Hasan M.T."/>
            <person name="Chang T.Y."/>
            <person name="Brown M.S."/>
            <person name="Goldstein J.L."/>
        </authorList>
    </citation>
    <scope>NUCLEOTIDE SEQUENCE [MRNA]</scope>
</reference>
<sequence length="510" mass="56499">MIPVSLVVVVVGGWTAVYLADLVLKSSVYFKHSYEDWLEKNGLSISPFHIRWQTSVFNRAFYSWGRRKARMLYQWFNFGMVFGVIAMFSSFFLLGKTLMQTLAQMMADSPSSSSSSSSSSSSSSSSSIHNEQVLQVVVPGINLPVNQLTYFFAAVLISGVVHEIGHGIAAIREQVRFNGFGIFLFIIYPGAFVDLFTTHLQLISPVQQLRIFCAGIWHNFVLALLGILALVLLPVILLPFYYTGVGVLITEVAEDSPAIGPRGLFVGDLVTHLQDCPVTNVQDWNECLDTIAYEPQIGYCISASTLQQLSFPVRAYKRLDGSTECCNNHSLTDVCFSYRNNFNKRLHTCLPARKAVEATQVCRTNKDCKTSSSSSFCIVPSLETHTRLIKVKHPPQIDMLYVGHPLHLHYTVSITSFIPRFNFLSIDLPVIVETFVKYLISLSGALAIVNAVPCFALDGQWILNSFLDATLTSVIGDNDVKDLIGFFILLGGSVLLAANVTLGLWMVTAR</sequence>
<name>MBTP2_CRIGR</name>
<dbReference type="EC" id="3.4.24.85" evidence="1"/>
<dbReference type="EMBL" id="AF019611">
    <property type="protein sequence ID" value="AAC53526.1"/>
    <property type="molecule type" value="mRNA"/>
</dbReference>
<dbReference type="RefSeq" id="NP_001231018.1">
    <property type="nucleotide sequence ID" value="NM_001244089.1"/>
</dbReference>
<dbReference type="MEROPS" id="M50.001"/>
<dbReference type="GlyCosmos" id="O54862">
    <property type="glycosylation" value="1 site, No reported glycans"/>
</dbReference>
<dbReference type="PaxDb" id="10029-NP_001231018.1"/>
<dbReference type="Ensembl" id="ENSCGRT00001022434.1">
    <property type="protein sequence ID" value="ENSCGRP00001018190.1"/>
    <property type="gene ID" value="ENSCGRG00001018020.1"/>
</dbReference>
<dbReference type="GeneID" id="100689085"/>
<dbReference type="KEGG" id="cge:100689085"/>
<dbReference type="CTD" id="51360"/>
<dbReference type="eggNOG" id="KOG2921">
    <property type="taxonomic scope" value="Eukaryota"/>
</dbReference>
<dbReference type="GeneTree" id="ENSGT00510000048066"/>
<dbReference type="OMA" id="FYSWGRW"/>
<dbReference type="OrthoDB" id="69989at2759"/>
<dbReference type="BRENDA" id="3.4.24.85">
    <property type="organism ID" value="1309"/>
</dbReference>
<dbReference type="Proteomes" id="UP000694386">
    <property type="component" value="Unplaced"/>
</dbReference>
<dbReference type="Proteomes" id="UP001108280">
    <property type="component" value="Chromosome X"/>
</dbReference>
<dbReference type="GO" id="GO:0005737">
    <property type="term" value="C:cytoplasm"/>
    <property type="evidence" value="ECO:0000250"/>
    <property type="project" value="UniProtKB"/>
</dbReference>
<dbReference type="GO" id="GO:0000139">
    <property type="term" value="C:Golgi membrane"/>
    <property type="evidence" value="ECO:0007669"/>
    <property type="project" value="UniProtKB-SubCell"/>
</dbReference>
<dbReference type="GO" id="GO:0046872">
    <property type="term" value="F:metal ion binding"/>
    <property type="evidence" value="ECO:0007669"/>
    <property type="project" value="UniProtKB-KW"/>
</dbReference>
<dbReference type="GO" id="GO:0004222">
    <property type="term" value="F:metalloendopeptidase activity"/>
    <property type="evidence" value="ECO:0007669"/>
    <property type="project" value="Ensembl"/>
</dbReference>
<dbReference type="GO" id="GO:0061629">
    <property type="term" value="F:RNA polymerase II-specific DNA-binding transcription factor binding"/>
    <property type="evidence" value="ECO:0000353"/>
    <property type="project" value="ParkinsonsUK-UCL"/>
</dbReference>
<dbReference type="GO" id="GO:0140537">
    <property type="term" value="F:transcription regulator activator activity"/>
    <property type="evidence" value="ECO:0000315"/>
    <property type="project" value="ParkinsonsUK-UCL"/>
</dbReference>
<dbReference type="GO" id="GO:0070977">
    <property type="term" value="P:bone maturation"/>
    <property type="evidence" value="ECO:0000250"/>
    <property type="project" value="UniProtKB"/>
</dbReference>
<dbReference type="GO" id="GO:0008203">
    <property type="term" value="P:cholesterol metabolic process"/>
    <property type="evidence" value="ECO:0007669"/>
    <property type="project" value="UniProtKB-KW"/>
</dbReference>
<dbReference type="GO" id="GO:0031293">
    <property type="term" value="P:membrane protein intracellular domain proteolysis"/>
    <property type="evidence" value="ECO:0000315"/>
    <property type="project" value="ParkinsonsUK-UCL"/>
</dbReference>
<dbReference type="GO" id="GO:0007095">
    <property type="term" value="P:mitotic G2 DNA damage checkpoint signaling"/>
    <property type="evidence" value="ECO:0007669"/>
    <property type="project" value="Ensembl"/>
</dbReference>
<dbReference type="GO" id="GO:0045542">
    <property type="term" value="P:positive regulation of cholesterol biosynthetic process"/>
    <property type="evidence" value="ECO:0007669"/>
    <property type="project" value="Ensembl"/>
</dbReference>
<dbReference type="GO" id="GO:0045944">
    <property type="term" value="P:positive regulation of transcription by RNA polymerase II"/>
    <property type="evidence" value="ECO:0000315"/>
    <property type="project" value="ParkinsonsUK-UCL"/>
</dbReference>
<dbReference type="GO" id="GO:0051604">
    <property type="term" value="P:protein maturation"/>
    <property type="evidence" value="ECO:0007669"/>
    <property type="project" value="Ensembl"/>
</dbReference>
<dbReference type="GO" id="GO:1905897">
    <property type="term" value="P:regulation of response to endoplasmic reticulum stress"/>
    <property type="evidence" value="ECO:0007669"/>
    <property type="project" value="TreeGrafter"/>
</dbReference>
<dbReference type="GO" id="GO:0034976">
    <property type="term" value="P:response to endoplasmic reticulum stress"/>
    <property type="evidence" value="ECO:0000315"/>
    <property type="project" value="ParkinsonsUK-UCL"/>
</dbReference>
<dbReference type="CDD" id="cd06775">
    <property type="entry name" value="cpPDZ_MBTPS2-like"/>
    <property type="match status" value="1"/>
</dbReference>
<dbReference type="CDD" id="cd06162">
    <property type="entry name" value="S2P-M50_PDZ_SREBP"/>
    <property type="match status" value="1"/>
</dbReference>
<dbReference type="Gene3D" id="2.30.42.10">
    <property type="match status" value="1"/>
</dbReference>
<dbReference type="InterPro" id="IPR001193">
    <property type="entry name" value="MBTPS2"/>
</dbReference>
<dbReference type="InterPro" id="IPR036034">
    <property type="entry name" value="PDZ_sf"/>
</dbReference>
<dbReference type="InterPro" id="IPR008915">
    <property type="entry name" value="Peptidase_M50"/>
</dbReference>
<dbReference type="PANTHER" id="PTHR13325:SF3">
    <property type="entry name" value="MEMBRANE-BOUND TRANSCRIPTION FACTOR SITE-2 PROTEASE"/>
    <property type="match status" value="1"/>
</dbReference>
<dbReference type="PANTHER" id="PTHR13325">
    <property type="entry name" value="PROTEASE M50 MEMBRANE-BOUND TRANSCRIPTION FACTOR SITE 2 PROTEASE"/>
    <property type="match status" value="1"/>
</dbReference>
<dbReference type="Pfam" id="PF02163">
    <property type="entry name" value="Peptidase_M50"/>
    <property type="match status" value="1"/>
</dbReference>
<dbReference type="PRINTS" id="PR01000">
    <property type="entry name" value="SREBPS2PTASE"/>
</dbReference>
<dbReference type="SUPFAM" id="SSF50156">
    <property type="entry name" value="PDZ domain-like"/>
    <property type="match status" value="1"/>
</dbReference>
<dbReference type="PROSITE" id="PS00142">
    <property type="entry name" value="ZINC_PROTEASE"/>
    <property type="match status" value="1"/>
</dbReference>
<proteinExistence type="evidence at transcript level"/>
<feature type="chain" id="PRO_0000088481" description="Membrane-bound transcription factor site-2 protease">
    <location>
        <begin position="1"/>
        <end position="510"/>
    </location>
</feature>
<feature type="topological domain" description="Cytoplasmic" evidence="1">
    <location>
        <begin position="1"/>
        <end position="3"/>
    </location>
</feature>
<feature type="transmembrane region" description="Helical" evidence="2">
    <location>
        <begin position="4"/>
        <end position="24"/>
    </location>
</feature>
<feature type="topological domain" description="Lumenal" evidence="1">
    <location>
        <begin position="25"/>
        <end position="74"/>
    </location>
</feature>
<feature type="transmembrane region" description="Helical" evidence="2">
    <location>
        <begin position="75"/>
        <end position="95"/>
    </location>
</feature>
<feature type="transmembrane region" description="Helical" evidence="2">
    <location>
        <begin position="96"/>
        <end position="107"/>
    </location>
</feature>
<feature type="topological domain" description="Lumenal" evidence="1">
    <location>
        <begin position="108"/>
        <end position="135"/>
    </location>
</feature>
<feature type="transmembrane region" description="Helical" evidence="2">
    <location>
        <begin position="136"/>
        <end position="160"/>
    </location>
</feature>
<feature type="transmembrane region" description="Helical" evidence="2">
    <location>
        <begin position="165"/>
        <end position="177"/>
    </location>
</feature>
<feature type="transmembrane region" description="Helical" evidence="2">
    <location>
        <begin position="178"/>
        <end position="200"/>
    </location>
</feature>
<feature type="transmembrane region" description="Helical" evidence="2">
    <location>
        <begin position="220"/>
        <end position="242"/>
    </location>
</feature>
<feature type="topological domain" description="Lumenal" evidence="1">
    <location>
        <begin position="243"/>
        <end position="437"/>
    </location>
</feature>
<feature type="transmembrane region" description="Helical" evidence="2">
    <location>
        <begin position="438"/>
        <end position="455"/>
    </location>
</feature>
<feature type="transmembrane region" description="Helical" evidence="2">
    <location>
        <begin position="456"/>
        <end position="467"/>
    </location>
</feature>
<feature type="topological domain" description="Lumenal" evidence="2">
    <location>
        <begin position="468"/>
        <end position="483"/>
    </location>
</feature>
<feature type="transmembrane region" description="Helical" evidence="2">
    <location>
        <begin position="484"/>
        <end position="504"/>
    </location>
</feature>
<feature type="topological domain" description="Cytoplasmic" evidence="2">
    <location>
        <begin position="505"/>
        <end position="510"/>
    </location>
</feature>
<feature type="active site" evidence="3">
    <location>
        <position position="163"/>
    </location>
</feature>
<feature type="binding site" evidence="3">
    <location>
        <position position="162"/>
    </location>
    <ligand>
        <name>Zn(2+)</name>
        <dbReference type="ChEBI" id="CHEBI:29105"/>
        <note>catalytic</note>
    </ligand>
</feature>
<feature type="binding site" evidence="3">
    <location>
        <position position="166"/>
    </location>
    <ligand>
        <name>Zn(2+)</name>
        <dbReference type="ChEBI" id="CHEBI:29105"/>
        <note>catalytic</note>
    </ligand>
</feature>
<feature type="glycosylation site" description="N-linked (GlcNAc...) asparagine" evidence="2">
    <location>
        <position position="328"/>
    </location>
</feature>
<accession>O54862</accession>
<evidence type="ECO:0000250" key="1">
    <source>
        <dbReference type="UniProtKB" id="O43462"/>
    </source>
</evidence>
<evidence type="ECO:0000255" key="2"/>
<evidence type="ECO:0000255" key="3">
    <source>
        <dbReference type="PROSITE-ProRule" id="PRU10095"/>
    </source>
</evidence>
<evidence type="ECO:0000305" key="4"/>
<gene>
    <name type="primary">MBTPS2</name>
    <name type="synonym">S2P</name>
</gene>
<protein>
    <recommendedName>
        <fullName>Membrane-bound transcription factor site-2 protease</fullName>
        <ecNumber evidence="1">3.4.24.85</ecNumber>
    </recommendedName>
    <alternativeName>
        <fullName>Endopeptidase S2P</fullName>
    </alternativeName>
    <alternativeName>
        <fullName>Sterol regulatory element-binding proteins intramembrane protease</fullName>
        <shortName>SREBPs intramembrane protease</shortName>
    </alternativeName>
</protein>
<comment type="function">
    <text evidence="1">Zinc metalloprotease that mediates intramembrane proteolysis of proteins such as ATF6, ATF6B, SREBF1/SREBP1 and SREBF2/SREBP2. Catalyzes the second step in the proteolytic activation of the sterol regulatory element-binding proteins (SREBPs) SREBF1/SREBP1 and SREBF2/SREBP2: cleaves SREBPs within the first transmembrane segment, thereby releasing the N-terminal segment with a portion of the transmembrane segment attached. Mature N-terminal SREBP fragments shuttle to the nucleus and activate gene transcription. Also mediates the second step in the proteolytic activation of the cyclic AMP-dependent transcription factor ATF-6 (ATF6 and ATF6B). Involved in intramembrane proteolysis during bone formation. In astrocytes and osteoblasts, upon DNA damage and ER stress, mediates the second step of the regulated intramembrane proteolytic activation of the transcription factor CREB3L1, leading to the inhibition of cell-cycle progression.</text>
</comment>
<comment type="catalytic activity">
    <reaction evidence="1">
        <text>Cleaves several transcription factors that are type-2 transmembrane proteins within membrane-spanning domains. Known substrates include sterol regulatory element-binding protein (SREBP) -1, SREBP-2 and forms of the transcriptional activator ATF6. SREBP-2 is cleaved at the site 477-DRSRILL-|-CVLTFLCLSFNPLTSLLQWGGA-505. The residues Asn-Pro, 11 residues distal to the site of cleavage in the membrane-spanning domain, are important for cleavage by S2P endopeptidase. Replacement of either of these residues does not prevent cleavage, but there is no cleavage if both of these residues are replaced.</text>
        <dbReference type="EC" id="3.4.24.85"/>
    </reaction>
</comment>
<comment type="cofactor">
    <cofactor evidence="1">
        <name>Zn(2+)</name>
        <dbReference type="ChEBI" id="CHEBI:29105"/>
    </cofactor>
    <text evidence="1">Binds 1 zinc ion per subunit.</text>
</comment>
<comment type="subcellular location">
    <subcellularLocation>
        <location evidence="1">Membrane</location>
        <topology evidence="2">Multi-pass membrane protein</topology>
    </subcellularLocation>
    <subcellularLocation>
        <location evidence="1">Cytoplasm</location>
    </subcellularLocation>
    <subcellularLocation>
        <location evidence="1">Golgi apparatus membrane</location>
        <topology evidence="2">Multi-pass membrane protein</topology>
    </subcellularLocation>
</comment>
<comment type="similarity">
    <text evidence="4">Belongs to the peptidase M50A family.</text>
</comment>
<keyword id="KW-0153">Cholesterol metabolism</keyword>
<keyword id="KW-0963">Cytoplasm</keyword>
<keyword id="KW-0325">Glycoprotein</keyword>
<keyword id="KW-0333">Golgi apparatus</keyword>
<keyword id="KW-0378">Hydrolase</keyword>
<keyword id="KW-0443">Lipid metabolism</keyword>
<keyword id="KW-0472">Membrane</keyword>
<keyword id="KW-0479">Metal-binding</keyword>
<keyword id="KW-0482">Metalloprotease</keyword>
<keyword id="KW-0645">Protease</keyword>
<keyword id="KW-0753">Steroid metabolism</keyword>
<keyword id="KW-1207">Sterol metabolism</keyword>
<keyword id="KW-0812">Transmembrane</keyword>
<keyword id="KW-1133">Transmembrane helix</keyword>
<keyword id="KW-0862">Zinc</keyword>